<proteinExistence type="inferred from homology"/>
<accession>Q92CW8</accession>
<gene>
    <name type="ordered locus">lin1053</name>
</gene>
<sequence length="204" mass="23558">MTFKGFSKKDFKTMQIPGLDARMAGIQNDIQPKFKAVGEELTTYLSAKLGDEMFLHIARHQRRSVNPPESTWLAICHDKRGYKKHPHFQVGLFDNYLFIWLAFIYENEESTKIANRFLKEKKLLAELPDTFAISPDHTEEKTYPVHGGQLDATLKRFRDVKKGEFLVGKIYLPDDNHLSPGKDFIKEAEMVLDELIPLYKAALQ</sequence>
<dbReference type="EMBL" id="AL596167">
    <property type="protein sequence ID" value="CAC96284.1"/>
    <property type="molecule type" value="Genomic_DNA"/>
</dbReference>
<dbReference type="PIR" id="AD1564">
    <property type="entry name" value="AD1564"/>
</dbReference>
<dbReference type="RefSeq" id="WP_010990730.1">
    <property type="nucleotide sequence ID" value="NC_003212.1"/>
</dbReference>
<dbReference type="SMR" id="Q92CW8"/>
<dbReference type="STRING" id="272626.gene:17565383"/>
<dbReference type="KEGG" id="lin:lin1053"/>
<dbReference type="eggNOG" id="COG4493">
    <property type="taxonomic scope" value="Bacteria"/>
</dbReference>
<dbReference type="HOGENOM" id="CLU_096059_0_0_9"/>
<dbReference type="OrthoDB" id="9812818at2"/>
<dbReference type="Proteomes" id="UP000002513">
    <property type="component" value="Chromosome"/>
</dbReference>
<dbReference type="Gene3D" id="3.30.930.20">
    <property type="entry name" value="Protein of unknown function DUF1054"/>
    <property type="match status" value="1"/>
</dbReference>
<dbReference type="HAMAP" id="MF_01851">
    <property type="entry name" value="UPF0637"/>
    <property type="match status" value="1"/>
</dbReference>
<dbReference type="InterPro" id="IPR009403">
    <property type="entry name" value="UPF0637"/>
</dbReference>
<dbReference type="InterPro" id="IPR053707">
    <property type="entry name" value="UPF0637_domain_sf"/>
</dbReference>
<dbReference type="Pfam" id="PF06335">
    <property type="entry name" value="DUF1054"/>
    <property type="match status" value="1"/>
</dbReference>
<dbReference type="PIRSF" id="PIRSF021332">
    <property type="entry name" value="DUF1054"/>
    <property type="match status" value="1"/>
</dbReference>
<dbReference type="SUPFAM" id="SSF142913">
    <property type="entry name" value="YktB/PF0168-like"/>
    <property type="match status" value="1"/>
</dbReference>
<comment type="similarity">
    <text evidence="1">Belongs to the UPF0637 family.</text>
</comment>
<feature type="chain" id="PRO_0000348313" description="UPF0637 protein lin1053">
    <location>
        <begin position="1"/>
        <end position="204"/>
    </location>
</feature>
<name>Y1053_LISIN</name>
<evidence type="ECO:0000255" key="1">
    <source>
        <dbReference type="HAMAP-Rule" id="MF_01851"/>
    </source>
</evidence>
<reference key="1">
    <citation type="journal article" date="2001" name="Science">
        <title>Comparative genomics of Listeria species.</title>
        <authorList>
            <person name="Glaser P."/>
            <person name="Frangeul L."/>
            <person name="Buchrieser C."/>
            <person name="Rusniok C."/>
            <person name="Amend A."/>
            <person name="Baquero F."/>
            <person name="Berche P."/>
            <person name="Bloecker H."/>
            <person name="Brandt P."/>
            <person name="Chakraborty T."/>
            <person name="Charbit A."/>
            <person name="Chetouani F."/>
            <person name="Couve E."/>
            <person name="de Daruvar A."/>
            <person name="Dehoux P."/>
            <person name="Domann E."/>
            <person name="Dominguez-Bernal G."/>
            <person name="Duchaud E."/>
            <person name="Durant L."/>
            <person name="Dussurget O."/>
            <person name="Entian K.-D."/>
            <person name="Fsihi H."/>
            <person name="Garcia-del Portillo F."/>
            <person name="Garrido P."/>
            <person name="Gautier L."/>
            <person name="Goebel W."/>
            <person name="Gomez-Lopez N."/>
            <person name="Hain T."/>
            <person name="Hauf J."/>
            <person name="Jackson D."/>
            <person name="Jones L.-M."/>
            <person name="Kaerst U."/>
            <person name="Kreft J."/>
            <person name="Kuhn M."/>
            <person name="Kunst F."/>
            <person name="Kurapkat G."/>
            <person name="Madueno E."/>
            <person name="Maitournam A."/>
            <person name="Mata Vicente J."/>
            <person name="Ng E."/>
            <person name="Nedjari H."/>
            <person name="Nordsiek G."/>
            <person name="Novella S."/>
            <person name="de Pablos B."/>
            <person name="Perez-Diaz J.-C."/>
            <person name="Purcell R."/>
            <person name="Remmel B."/>
            <person name="Rose M."/>
            <person name="Schlueter T."/>
            <person name="Simoes N."/>
            <person name="Tierrez A."/>
            <person name="Vazquez-Boland J.-A."/>
            <person name="Voss H."/>
            <person name="Wehland J."/>
            <person name="Cossart P."/>
        </authorList>
    </citation>
    <scope>NUCLEOTIDE SEQUENCE [LARGE SCALE GENOMIC DNA]</scope>
    <source>
        <strain>ATCC BAA-680 / CLIP 11262</strain>
    </source>
</reference>
<protein>
    <recommendedName>
        <fullName evidence="1">UPF0637 protein lin1053</fullName>
    </recommendedName>
</protein>
<organism>
    <name type="scientific">Listeria innocua serovar 6a (strain ATCC BAA-680 / CLIP 11262)</name>
    <dbReference type="NCBI Taxonomy" id="272626"/>
    <lineage>
        <taxon>Bacteria</taxon>
        <taxon>Bacillati</taxon>
        <taxon>Bacillota</taxon>
        <taxon>Bacilli</taxon>
        <taxon>Bacillales</taxon>
        <taxon>Listeriaceae</taxon>
        <taxon>Listeria</taxon>
    </lineage>
</organism>